<evidence type="ECO:0000255" key="1">
    <source>
        <dbReference type="HAMAP-Rule" id="MF_01709"/>
    </source>
</evidence>
<keyword id="KW-0067">ATP-binding</keyword>
<keyword id="KW-0997">Cell inner membrane</keyword>
<keyword id="KW-1003">Cell membrane</keyword>
<keyword id="KW-0472">Membrane</keyword>
<keyword id="KW-0547">Nucleotide-binding</keyword>
<keyword id="KW-1185">Reference proteome</keyword>
<keyword id="KW-0762">Sugar transport</keyword>
<keyword id="KW-1278">Translocase</keyword>
<keyword id="KW-0813">Transport</keyword>
<sequence length="369" mass="40833">MTSVTLRNVCKSYGDVKISKNVDLDINSGEFVVFVGPSGCGKSTLLRCIAGLEDITSGDLYMGDKRMNDVEPSKRGVGMVFQSYALYPHLNLFDNMSFGLKLAKADKNEIKKRVDHAADILQLGHLLERQPKALSGGQRQRVAIGRTLVSQPDVFLLDEPLSNLDAALRVQMRIEIAKLHKKLGCTMIYVTHDQVEAMTMAEKIVVLDGGYVSQVGAPLELYHYPKNRFVAGFIGSPKMNFVSVFIEEVEKSQVKVQFKNGASFWIPVDGSNVKRGERMSLGIRPEHLVPAENGDAVIDGDILVVEKLGYETQIYLTIEDGDADMIYRVPDTALVKAGERFSVGIPAHRCHLFHNDGKACQRLYKEAGV</sequence>
<accession>Q5DZC6</accession>
<gene>
    <name evidence="1" type="primary">malK</name>
    <name type="ordered locus">VF_A0800</name>
</gene>
<reference key="1">
    <citation type="journal article" date="2005" name="Proc. Natl. Acad. Sci. U.S.A.">
        <title>Complete genome sequence of Vibrio fischeri: a symbiotic bacterium with pathogenic congeners.</title>
        <authorList>
            <person name="Ruby E.G."/>
            <person name="Urbanowski M."/>
            <person name="Campbell J."/>
            <person name="Dunn A."/>
            <person name="Faini M."/>
            <person name="Gunsalus R."/>
            <person name="Lostroh P."/>
            <person name="Lupp C."/>
            <person name="McCann J."/>
            <person name="Millikan D."/>
            <person name="Schaefer A."/>
            <person name="Stabb E."/>
            <person name="Stevens A."/>
            <person name="Visick K."/>
            <person name="Whistler C."/>
            <person name="Greenberg E.P."/>
        </authorList>
    </citation>
    <scope>NUCLEOTIDE SEQUENCE [LARGE SCALE GENOMIC DNA]</scope>
    <source>
        <strain>ATCC 700601 / ES114</strain>
    </source>
</reference>
<feature type="chain" id="PRO_0000274001" description="Maltose/maltodextrin import ATP-binding protein MalK">
    <location>
        <begin position="1"/>
        <end position="369"/>
    </location>
</feature>
<feature type="domain" description="ABC transporter" evidence="1">
    <location>
        <begin position="4"/>
        <end position="234"/>
    </location>
</feature>
<feature type="binding site" evidence="1">
    <location>
        <begin position="36"/>
        <end position="43"/>
    </location>
    <ligand>
        <name>ATP</name>
        <dbReference type="ChEBI" id="CHEBI:30616"/>
    </ligand>
</feature>
<protein>
    <recommendedName>
        <fullName evidence="1">Maltose/maltodextrin import ATP-binding protein MalK</fullName>
        <ecNumber evidence="1">7.5.2.1</ecNumber>
    </recommendedName>
</protein>
<comment type="function">
    <text evidence="1">Part of the ABC transporter complex MalEFGK involved in maltose/maltodextrin import. Responsible for energy coupling to the transport system.</text>
</comment>
<comment type="catalytic activity">
    <reaction evidence="1">
        <text>D-maltose(out) + ATP + H2O = D-maltose(in) + ADP + phosphate + H(+)</text>
        <dbReference type="Rhea" id="RHEA:22132"/>
        <dbReference type="ChEBI" id="CHEBI:15377"/>
        <dbReference type="ChEBI" id="CHEBI:15378"/>
        <dbReference type="ChEBI" id="CHEBI:17306"/>
        <dbReference type="ChEBI" id="CHEBI:30616"/>
        <dbReference type="ChEBI" id="CHEBI:43474"/>
        <dbReference type="ChEBI" id="CHEBI:456216"/>
        <dbReference type="EC" id="7.5.2.1"/>
    </reaction>
</comment>
<comment type="subunit">
    <text evidence="1">The complex is composed of two ATP-binding proteins (MalK), two transmembrane proteins (MalG and MalK) and a solute-binding protein (MalE).</text>
</comment>
<comment type="subcellular location">
    <subcellularLocation>
        <location evidence="1">Cell inner membrane</location>
        <topology evidence="1">Peripheral membrane protein</topology>
    </subcellularLocation>
</comment>
<comment type="similarity">
    <text evidence="1">Belongs to the ABC transporter superfamily. Maltooligosaccharide importer (TC 3.A.1.1.1) family.</text>
</comment>
<organism>
    <name type="scientific">Aliivibrio fischeri (strain ATCC 700601 / ES114)</name>
    <name type="common">Vibrio fischeri</name>
    <dbReference type="NCBI Taxonomy" id="312309"/>
    <lineage>
        <taxon>Bacteria</taxon>
        <taxon>Pseudomonadati</taxon>
        <taxon>Pseudomonadota</taxon>
        <taxon>Gammaproteobacteria</taxon>
        <taxon>Vibrionales</taxon>
        <taxon>Vibrionaceae</taxon>
        <taxon>Aliivibrio</taxon>
    </lineage>
</organism>
<name>MALK_ALIF1</name>
<proteinExistence type="inferred from homology"/>
<dbReference type="EC" id="7.5.2.1" evidence="1"/>
<dbReference type="EMBL" id="CP000021">
    <property type="protein sequence ID" value="AAW87870.1"/>
    <property type="molecule type" value="Genomic_DNA"/>
</dbReference>
<dbReference type="RefSeq" id="WP_011263621.1">
    <property type="nucleotide sequence ID" value="NC_006841.2"/>
</dbReference>
<dbReference type="RefSeq" id="YP_206758.1">
    <property type="nucleotide sequence ID" value="NC_006841.2"/>
</dbReference>
<dbReference type="SMR" id="Q5DZC6"/>
<dbReference type="STRING" id="312309.VF_A0800"/>
<dbReference type="EnsemblBacteria" id="AAW87870">
    <property type="protein sequence ID" value="AAW87870"/>
    <property type="gene ID" value="VF_A0800"/>
</dbReference>
<dbReference type="GeneID" id="54166119"/>
<dbReference type="KEGG" id="vfi:VF_A0800"/>
<dbReference type="PATRIC" id="fig|312309.11.peg.3402"/>
<dbReference type="eggNOG" id="COG3842">
    <property type="taxonomic scope" value="Bacteria"/>
</dbReference>
<dbReference type="HOGENOM" id="CLU_000604_1_1_6"/>
<dbReference type="OrthoDB" id="9802264at2"/>
<dbReference type="Proteomes" id="UP000000537">
    <property type="component" value="Chromosome II"/>
</dbReference>
<dbReference type="GO" id="GO:0055052">
    <property type="term" value="C:ATP-binding cassette (ABC) transporter complex, substrate-binding subunit-containing"/>
    <property type="evidence" value="ECO:0007669"/>
    <property type="project" value="TreeGrafter"/>
</dbReference>
<dbReference type="GO" id="GO:1990060">
    <property type="term" value="C:maltose transport complex"/>
    <property type="evidence" value="ECO:0007669"/>
    <property type="project" value="TreeGrafter"/>
</dbReference>
<dbReference type="GO" id="GO:0015423">
    <property type="term" value="F:ABC-type maltose transporter activity"/>
    <property type="evidence" value="ECO:0007669"/>
    <property type="project" value="UniProtKB-EC"/>
</dbReference>
<dbReference type="GO" id="GO:0005524">
    <property type="term" value="F:ATP binding"/>
    <property type="evidence" value="ECO:0007669"/>
    <property type="project" value="UniProtKB-KW"/>
</dbReference>
<dbReference type="GO" id="GO:0016887">
    <property type="term" value="F:ATP hydrolysis activity"/>
    <property type="evidence" value="ECO:0007669"/>
    <property type="project" value="InterPro"/>
</dbReference>
<dbReference type="CDD" id="cd03301">
    <property type="entry name" value="ABC_MalK_N"/>
    <property type="match status" value="1"/>
</dbReference>
<dbReference type="FunFam" id="3.40.50.300:FF:000042">
    <property type="entry name" value="Maltose/maltodextrin ABC transporter, ATP-binding protein"/>
    <property type="match status" value="1"/>
</dbReference>
<dbReference type="FunFam" id="2.40.50.100:FF:000014">
    <property type="entry name" value="Maltose/maltodextrin import ATP-binding protein MalK"/>
    <property type="match status" value="1"/>
</dbReference>
<dbReference type="Gene3D" id="2.40.50.100">
    <property type="match status" value="1"/>
</dbReference>
<dbReference type="Gene3D" id="2.40.50.140">
    <property type="entry name" value="Nucleic acid-binding proteins"/>
    <property type="match status" value="1"/>
</dbReference>
<dbReference type="Gene3D" id="3.40.50.300">
    <property type="entry name" value="P-loop containing nucleotide triphosphate hydrolases"/>
    <property type="match status" value="1"/>
</dbReference>
<dbReference type="InterPro" id="IPR003593">
    <property type="entry name" value="AAA+_ATPase"/>
</dbReference>
<dbReference type="InterPro" id="IPR003439">
    <property type="entry name" value="ABC_transporter-like_ATP-bd"/>
</dbReference>
<dbReference type="InterPro" id="IPR017871">
    <property type="entry name" value="ABC_transporter-like_CS"/>
</dbReference>
<dbReference type="InterPro" id="IPR015855">
    <property type="entry name" value="ABC_transpr_MalK-like"/>
</dbReference>
<dbReference type="InterPro" id="IPR047641">
    <property type="entry name" value="ABC_transpr_MalK/UgpC-like"/>
</dbReference>
<dbReference type="InterPro" id="IPR008995">
    <property type="entry name" value="Mo/tungstate-bd_C_term_dom"/>
</dbReference>
<dbReference type="InterPro" id="IPR012340">
    <property type="entry name" value="NA-bd_OB-fold"/>
</dbReference>
<dbReference type="InterPro" id="IPR027417">
    <property type="entry name" value="P-loop_NTPase"/>
</dbReference>
<dbReference type="InterPro" id="IPR013611">
    <property type="entry name" value="Transp-assoc_OB_typ2"/>
</dbReference>
<dbReference type="NCBIfam" id="NF008233">
    <property type="entry name" value="PRK11000.1"/>
    <property type="match status" value="1"/>
</dbReference>
<dbReference type="NCBIfam" id="NF008653">
    <property type="entry name" value="PRK11650.1"/>
    <property type="match status" value="1"/>
</dbReference>
<dbReference type="PANTHER" id="PTHR43875">
    <property type="entry name" value="MALTODEXTRIN IMPORT ATP-BINDING PROTEIN MSMX"/>
    <property type="match status" value="1"/>
</dbReference>
<dbReference type="PANTHER" id="PTHR43875:SF3">
    <property type="entry name" value="MALTOSE_MALTODEXTRIN IMPORT ATP-BINDING PROTEIN MALK"/>
    <property type="match status" value="1"/>
</dbReference>
<dbReference type="Pfam" id="PF00005">
    <property type="entry name" value="ABC_tran"/>
    <property type="match status" value="1"/>
</dbReference>
<dbReference type="Pfam" id="PF08402">
    <property type="entry name" value="TOBE_2"/>
    <property type="match status" value="1"/>
</dbReference>
<dbReference type="SMART" id="SM00382">
    <property type="entry name" value="AAA"/>
    <property type="match status" value="1"/>
</dbReference>
<dbReference type="SUPFAM" id="SSF50331">
    <property type="entry name" value="MOP-like"/>
    <property type="match status" value="1"/>
</dbReference>
<dbReference type="SUPFAM" id="SSF52540">
    <property type="entry name" value="P-loop containing nucleoside triphosphate hydrolases"/>
    <property type="match status" value="1"/>
</dbReference>
<dbReference type="PROSITE" id="PS00211">
    <property type="entry name" value="ABC_TRANSPORTER_1"/>
    <property type="match status" value="1"/>
</dbReference>
<dbReference type="PROSITE" id="PS50893">
    <property type="entry name" value="ABC_TRANSPORTER_2"/>
    <property type="match status" value="1"/>
</dbReference>
<dbReference type="PROSITE" id="PS51245">
    <property type="entry name" value="MALK"/>
    <property type="match status" value="1"/>
</dbReference>